<gene>
    <name evidence="1" type="primary">panB</name>
    <name type="ordered locus">Maqu_0667</name>
</gene>
<evidence type="ECO:0000255" key="1">
    <source>
        <dbReference type="HAMAP-Rule" id="MF_00156"/>
    </source>
</evidence>
<proteinExistence type="inferred from homology"/>
<sequence>MAVTINTLREYKQKGEAFSALTSYDATFAQVVSEAGVDVILIGDSLGMVLQGHDSTLPVTMDQMVYHTSCVARGNKGALIMADMPFMSYGTVADALDNAAELMRAGAHMVKLEGTDWMKDTIEALSERGVPVCAHLGLTPQFVNKFGGYKVQGRDEKAAEAMIEHACELEAAGADLILLECVPAPLAARITQAVKAPVIGIGAGSDTDGQVLVLHDMLGVTTGRKPRFVKNFLAETDSIPEAIAAYAQAVKARTFPAEEHTFKA</sequence>
<organism>
    <name type="scientific">Marinobacter nauticus (strain ATCC 700491 / DSM 11845 / VT8)</name>
    <name type="common">Marinobacter aquaeolei</name>
    <dbReference type="NCBI Taxonomy" id="351348"/>
    <lineage>
        <taxon>Bacteria</taxon>
        <taxon>Pseudomonadati</taxon>
        <taxon>Pseudomonadota</taxon>
        <taxon>Gammaproteobacteria</taxon>
        <taxon>Pseudomonadales</taxon>
        <taxon>Marinobacteraceae</taxon>
        <taxon>Marinobacter</taxon>
    </lineage>
</organism>
<protein>
    <recommendedName>
        <fullName evidence="1">3-methyl-2-oxobutanoate hydroxymethyltransferase</fullName>
        <ecNumber evidence="1">2.1.2.11</ecNumber>
    </recommendedName>
    <alternativeName>
        <fullName evidence="1">Ketopantoate hydroxymethyltransferase</fullName>
        <shortName evidence="1">KPHMT</shortName>
    </alternativeName>
</protein>
<accession>A1TYE6</accession>
<reference key="1">
    <citation type="journal article" date="2011" name="Appl. Environ. Microbiol.">
        <title>Genomic potential of Marinobacter aquaeolei, a biogeochemical 'opportunitroph'.</title>
        <authorList>
            <person name="Singer E."/>
            <person name="Webb E.A."/>
            <person name="Nelson W.C."/>
            <person name="Heidelberg J.F."/>
            <person name="Ivanova N."/>
            <person name="Pati A."/>
            <person name="Edwards K.J."/>
        </authorList>
    </citation>
    <scope>NUCLEOTIDE SEQUENCE [LARGE SCALE GENOMIC DNA]</scope>
    <source>
        <strain>ATCC 700491 / DSM 11845 / VT8</strain>
    </source>
</reference>
<name>PANB_MARN8</name>
<dbReference type="EC" id="2.1.2.11" evidence="1"/>
<dbReference type="EMBL" id="CP000514">
    <property type="protein sequence ID" value="ABM17765.1"/>
    <property type="molecule type" value="Genomic_DNA"/>
</dbReference>
<dbReference type="RefSeq" id="WP_011784197.1">
    <property type="nucleotide sequence ID" value="NC_008740.1"/>
</dbReference>
<dbReference type="SMR" id="A1TYE6"/>
<dbReference type="STRING" id="351348.Maqu_0667"/>
<dbReference type="GeneID" id="31820033"/>
<dbReference type="KEGG" id="maq:Maqu_0667"/>
<dbReference type="eggNOG" id="COG0413">
    <property type="taxonomic scope" value="Bacteria"/>
</dbReference>
<dbReference type="HOGENOM" id="CLU_036645_1_0_6"/>
<dbReference type="OrthoDB" id="9781789at2"/>
<dbReference type="UniPathway" id="UPA00028">
    <property type="reaction ID" value="UER00003"/>
</dbReference>
<dbReference type="Proteomes" id="UP000000998">
    <property type="component" value="Chromosome"/>
</dbReference>
<dbReference type="GO" id="GO:0005737">
    <property type="term" value="C:cytoplasm"/>
    <property type="evidence" value="ECO:0007669"/>
    <property type="project" value="UniProtKB-SubCell"/>
</dbReference>
<dbReference type="GO" id="GO:0003864">
    <property type="term" value="F:3-methyl-2-oxobutanoate hydroxymethyltransferase activity"/>
    <property type="evidence" value="ECO:0007669"/>
    <property type="project" value="UniProtKB-UniRule"/>
</dbReference>
<dbReference type="GO" id="GO:0000287">
    <property type="term" value="F:magnesium ion binding"/>
    <property type="evidence" value="ECO:0007669"/>
    <property type="project" value="TreeGrafter"/>
</dbReference>
<dbReference type="GO" id="GO:0015940">
    <property type="term" value="P:pantothenate biosynthetic process"/>
    <property type="evidence" value="ECO:0007669"/>
    <property type="project" value="UniProtKB-UniRule"/>
</dbReference>
<dbReference type="CDD" id="cd06557">
    <property type="entry name" value="KPHMT-like"/>
    <property type="match status" value="1"/>
</dbReference>
<dbReference type="FunFam" id="3.20.20.60:FF:000003">
    <property type="entry name" value="3-methyl-2-oxobutanoate hydroxymethyltransferase"/>
    <property type="match status" value="1"/>
</dbReference>
<dbReference type="Gene3D" id="3.20.20.60">
    <property type="entry name" value="Phosphoenolpyruvate-binding domains"/>
    <property type="match status" value="1"/>
</dbReference>
<dbReference type="HAMAP" id="MF_00156">
    <property type="entry name" value="PanB"/>
    <property type="match status" value="1"/>
</dbReference>
<dbReference type="InterPro" id="IPR003700">
    <property type="entry name" value="Pantoate_hydroxy_MeTrfase"/>
</dbReference>
<dbReference type="InterPro" id="IPR015813">
    <property type="entry name" value="Pyrv/PenolPyrv_kinase-like_dom"/>
</dbReference>
<dbReference type="InterPro" id="IPR040442">
    <property type="entry name" value="Pyrv_kinase-like_dom_sf"/>
</dbReference>
<dbReference type="NCBIfam" id="TIGR00222">
    <property type="entry name" value="panB"/>
    <property type="match status" value="1"/>
</dbReference>
<dbReference type="NCBIfam" id="NF001452">
    <property type="entry name" value="PRK00311.1"/>
    <property type="match status" value="1"/>
</dbReference>
<dbReference type="PANTHER" id="PTHR20881">
    <property type="entry name" value="3-METHYL-2-OXOBUTANOATE HYDROXYMETHYLTRANSFERASE"/>
    <property type="match status" value="1"/>
</dbReference>
<dbReference type="PANTHER" id="PTHR20881:SF0">
    <property type="entry name" value="3-METHYL-2-OXOBUTANOATE HYDROXYMETHYLTRANSFERASE"/>
    <property type="match status" value="1"/>
</dbReference>
<dbReference type="Pfam" id="PF02548">
    <property type="entry name" value="Pantoate_transf"/>
    <property type="match status" value="1"/>
</dbReference>
<dbReference type="PIRSF" id="PIRSF000388">
    <property type="entry name" value="Pantoate_hydroxy_MeTrfase"/>
    <property type="match status" value="1"/>
</dbReference>
<dbReference type="SUPFAM" id="SSF51621">
    <property type="entry name" value="Phosphoenolpyruvate/pyruvate domain"/>
    <property type="match status" value="1"/>
</dbReference>
<feature type="chain" id="PRO_0000297293" description="3-methyl-2-oxobutanoate hydroxymethyltransferase">
    <location>
        <begin position="1"/>
        <end position="264"/>
    </location>
</feature>
<feature type="active site" description="Proton acceptor" evidence="1">
    <location>
        <position position="180"/>
    </location>
</feature>
<feature type="binding site" evidence="1">
    <location>
        <begin position="44"/>
        <end position="45"/>
    </location>
    <ligand>
        <name>3-methyl-2-oxobutanoate</name>
        <dbReference type="ChEBI" id="CHEBI:11851"/>
    </ligand>
</feature>
<feature type="binding site" evidence="1">
    <location>
        <position position="44"/>
    </location>
    <ligand>
        <name>Mg(2+)</name>
        <dbReference type="ChEBI" id="CHEBI:18420"/>
    </ligand>
</feature>
<feature type="binding site" evidence="1">
    <location>
        <position position="83"/>
    </location>
    <ligand>
        <name>3-methyl-2-oxobutanoate</name>
        <dbReference type="ChEBI" id="CHEBI:11851"/>
    </ligand>
</feature>
<feature type="binding site" evidence="1">
    <location>
        <position position="83"/>
    </location>
    <ligand>
        <name>Mg(2+)</name>
        <dbReference type="ChEBI" id="CHEBI:18420"/>
    </ligand>
</feature>
<feature type="binding site" evidence="1">
    <location>
        <position position="111"/>
    </location>
    <ligand>
        <name>3-methyl-2-oxobutanoate</name>
        <dbReference type="ChEBI" id="CHEBI:11851"/>
    </ligand>
</feature>
<feature type="binding site" evidence="1">
    <location>
        <position position="113"/>
    </location>
    <ligand>
        <name>Mg(2+)</name>
        <dbReference type="ChEBI" id="CHEBI:18420"/>
    </ligand>
</feature>
<comment type="function">
    <text evidence="1">Catalyzes the reversible reaction in which hydroxymethyl group from 5,10-methylenetetrahydrofolate is transferred onto alpha-ketoisovalerate to form ketopantoate.</text>
</comment>
<comment type="catalytic activity">
    <reaction evidence="1">
        <text>3-methyl-2-oxobutanoate + (6R)-5,10-methylene-5,6,7,8-tetrahydrofolate + H2O = 2-dehydropantoate + (6S)-5,6,7,8-tetrahydrofolate</text>
        <dbReference type="Rhea" id="RHEA:11824"/>
        <dbReference type="ChEBI" id="CHEBI:11561"/>
        <dbReference type="ChEBI" id="CHEBI:11851"/>
        <dbReference type="ChEBI" id="CHEBI:15377"/>
        <dbReference type="ChEBI" id="CHEBI:15636"/>
        <dbReference type="ChEBI" id="CHEBI:57453"/>
        <dbReference type="EC" id="2.1.2.11"/>
    </reaction>
</comment>
<comment type="cofactor">
    <cofactor evidence="1">
        <name>Mg(2+)</name>
        <dbReference type="ChEBI" id="CHEBI:18420"/>
    </cofactor>
    <text evidence="1">Binds 1 Mg(2+) ion per subunit.</text>
</comment>
<comment type="pathway">
    <text evidence="1">Cofactor biosynthesis; (R)-pantothenate biosynthesis; (R)-pantoate from 3-methyl-2-oxobutanoate: step 1/2.</text>
</comment>
<comment type="subunit">
    <text evidence="1">Homodecamer; pentamer of dimers.</text>
</comment>
<comment type="subcellular location">
    <subcellularLocation>
        <location evidence="1">Cytoplasm</location>
    </subcellularLocation>
</comment>
<comment type="similarity">
    <text evidence="1">Belongs to the PanB family.</text>
</comment>
<keyword id="KW-0963">Cytoplasm</keyword>
<keyword id="KW-0460">Magnesium</keyword>
<keyword id="KW-0479">Metal-binding</keyword>
<keyword id="KW-0566">Pantothenate biosynthesis</keyword>
<keyword id="KW-0808">Transferase</keyword>